<dbReference type="EMBL" id="CP000769">
    <property type="protein sequence ID" value="ABS24844.1"/>
    <property type="molecule type" value="Genomic_DNA"/>
</dbReference>
<dbReference type="RefSeq" id="WP_011984950.1">
    <property type="nucleotide sequence ID" value="NC_009675.1"/>
</dbReference>
<dbReference type="SMR" id="A7H7Z8"/>
<dbReference type="STRING" id="404589.Anae109_0631"/>
<dbReference type="KEGG" id="afw:Anae109_0631"/>
<dbReference type="eggNOG" id="COG1438">
    <property type="taxonomic scope" value="Bacteria"/>
</dbReference>
<dbReference type="HOGENOM" id="CLU_097103_1_1_7"/>
<dbReference type="OrthoDB" id="7060358at2"/>
<dbReference type="UniPathway" id="UPA00068"/>
<dbReference type="Proteomes" id="UP000006382">
    <property type="component" value="Chromosome"/>
</dbReference>
<dbReference type="GO" id="GO:0005737">
    <property type="term" value="C:cytoplasm"/>
    <property type="evidence" value="ECO:0007669"/>
    <property type="project" value="UniProtKB-SubCell"/>
</dbReference>
<dbReference type="GO" id="GO:0034618">
    <property type="term" value="F:arginine binding"/>
    <property type="evidence" value="ECO:0007669"/>
    <property type="project" value="InterPro"/>
</dbReference>
<dbReference type="GO" id="GO:0003677">
    <property type="term" value="F:DNA binding"/>
    <property type="evidence" value="ECO:0007669"/>
    <property type="project" value="UniProtKB-KW"/>
</dbReference>
<dbReference type="GO" id="GO:0003700">
    <property type="term" value="F:DNA-binding transcription factor activity"/>
    <property type="evidence" value="ECO:0007669"/>
    <property type="project" value="UniProtKB-UniRule"/>
</dbReference>
<dbReference type="GO" id="GO:0006526">
    <property type="term" value="P:L-arginine biosynthetic process"/>
    <property type="evidence" value="ECO:0007669"/>
    <property type="project" value="UniProtKB-UniPathway"/>
</dbReference>
<dbReference type="GO" id="GO:0051259">
    <property type="term" value="P:protein complex oligomerization"/>
    <property type="evidence" value="ECO:0007669"/>
    <property type="project" value="InterPro"/>
</dbReference>
<dbReference type="GO" id="GO:1900079">
    <property type="term" value="P:regulation of arginine biosynthetic process"/>
    <property type="evidence" value="ECO:0007669"/>
    <property type="project" value="UniProtKB-UniRule"/>
</dbReference>
<dbReference type="Gene3D" id="3.30.1360.40">
    <property type="match status" value="1"/>
</dbReference>
<dbReference type="Gene3D" id="1.10.10.10">
    <property type="entry name" value="Winged helix-like DNA-binding domain superfamily/Winged helix DNA-binding domain"/>
    <property type="match status" value="1"/>
</dbReference>
<dbReference type="HAMAP" id="MF_00173">
    <property type="entry name" value="Arg_repressor"/>
    <property type="match status" value="1"/>
</dbReference>
<dbReference type="InterPro" id="IPR001669">
    <property type="entry name" value="Arg_repress"/>
</dbReference>
<dbReference type="InterPro" id="IPR020899">
    <property type="entry name" value="Arg_repress_C"/>
</dbReference>
<dbReference type="InterPro" id="IPR036251">
    <property type="entry name" value="Arg_repress_C_sf"/>
</dbReference>
<dbReference type="InterPro" id="IPR020900">
    <property type="entry name" value="Arg_repress_DNA-bd"/>
</dbReference>
<dbReference type="InterPro" id="IPR036388">
    <property type="entry name" value="WH-like_DNA-bd_sf"/>
</dbReference>
<dbReference type="InterPro" id="IPR036390">
    <property type="entry name" value="WH_DNA-bd_sf"/>
</dbReference>
<dbReference type="PANTHER" id="PTHR34471">
    <property type="entry name" value="ARGININE REPRESSOR"/>
    <property type="match status" value="1"/>
</dbReference>
<dbReference type="PANTHER" id="PTHR34471:SF1">
    <property type="entry name" value="ARGININE REPRESSOR"/>
    <property type="match status" value="1"/>
</dbReference>
<dbReference type="Pfam" id="PF01316">
    <property type="entry name" value="Arg_repressor"/>
    <property type="match status" value="1"/>
</dbReference>
<dbReference type="Pfam" id="PF02863">
    <property type="entry name" value="Arg_repressor_C"/>
    <property type="match status" value="1"/>
</dbReference>
<dbReference type="PRINTS" id="PR01467">
    <property type="entry name" value="ARGREPRESSOR"/>
</dbReference>
<dbReference type="SUPFAM" id="SSF55252">
    <property type="entry name" value="C-terminal domain of arginine repressor"/>
    <property type="match status" value="1"/>
</dbReference>
<dbReference type="SUPFAM" id="SSF46785">
    <property type="entry name" value="Winged helix' DNA-binding domain"/>
    <property type="match status" value="1"/>
</dbReference>
<proteinExistence type="inferred from homology"/>
<sequence length="158" mass="16477">MTHQRHRREVVARLLRARRIGTQEELLEALRAGGIEATQATLSRDLAQLGARRVSRPEGGTVYELPAGAAERDGLATLRGLVSEVASNASLVVIRTHPGSAPAIARAIDLAGLPDVLGTIAGDDTIFVAPAGELRARKLATRLADLLGAPVAGEGPAQ</sequence>
<gene>
    <name evidence="1" type="primary">argR</name>
    <name type="ordered locus">Anae109_0631</name>
</gene>
<feature type="chain" id="PRO_1000023544" description="Arginine repressor">
    <location>
        <begin position="1"/>
        <end position="158"/>
    </location>
</feature>
<accession>A7H7Z8</accession>
<name>ARGR_ANADF</name>
<keyword id="KW-0028">Amino-acid biosynthesis</keyword>
<keyword id="KW-0055">Arginine biosynthesis</keyword>
<keyword id="KW-0963">Cytoplasm</keyword>
<keyword id="KW-0238">DNA-binding</keyword>
<keyword id="KW-1185">Reference proteome</keyword>
<keyword id="KW-0678">Repressor</keyword>
<keyword id="KW-0804">Transcription</keyword>
<keyword id="KW-0805">Transcription regulation</keyword>
<protein>
    <recommendedName>
        <fullName evidence="1">Arginine repressor</fullName>
    </recommendedName>
</protein>
<evidence type="ECO:0000255" key="1">
    <source>
        <dbReference type="HAMAP-Rule" id="MF_00173"/>
    </source>
</evidence>
<reference key="1">
    <citation type="journal article" date="2015" name="Genome Announc.">
        <title>Complete genome sequence of Anaeromyxobacter sp. Fw109-5, an anaerobic, metal-reducing bacterium isolated from a contaminated subsurface environment.</title>
        <authorList>
            <person name="Hwang C."/>
            <person name="Copeland A."/>
            <person name="Lucas S."/>
            <person name="Lapidus A."/>
            <person name="Barry K."/>
            <person name="Glavina Del Rio T."/>
            <person name="Dalin E."/>
            <person name="Tice H."/>
            <person name="Pitluck S."/>
            <person name="Sims D."/>
            <person name="Brettin T."/>
            <person name="Bruce D.C."/>
            <person name="Detter J.C."/>
            <person name="Han C.S."/>
            <person name="Schmutz J."/>
            <person name="Larimer F.W."/>
            <person name="Land M.L."/>
            <person name="Hauser L.J."/>
            <person name="Kyrpides N."/>
            <person name="Lykidis A."/>
            <person name="Richardson P."/>
            <person name="Belieav A."/>
            <person name="Sanford R.A."/>
            <person name="Loeffler F.E."/>
            <person name="Fields M.W."/>
        </authorList>
    </citation>
    <scope>NUCLEOTIDE SEQUENCE [LARGE SCALE GENOMIC DNA]</scope>
    <source>
        <strain>Fw109-5</strain>
    </source>
</reference>
<organism>
    <name type="scientific">Anaeromyxobacter sp. (strain Fw109-5)</name>
    <dbReference type="NCBI Taxonomy" id="404589"/>
    <lineage>
        <taxon>Bacteria</taxon>
        <taxon>Pseudomonadati</taxon>
        <taxon>Myxococcota</taxon>
        <taxon>Myxococcia</taxon>
        <taxon>Myxococcales</taxon>
        <taxon>Cystobacterineae</taxon>
        <taxon>Anaeromyxobacteraceae</taxon>
        <taxon>Anaeromyxobacter</taxon>
    </lineage>
</organism>
<comment type="function">
    <text evidence="1">Regulates arginine biosynthesis genes.</text>
</comment>
<comment type="pathway">
    <text>Amino-acid biosynthesis; L-arginine biosynthesis [regulation].</text>
</comment>
<comment type="subcellular location">
    <subcellularLocation>
        <location evidence="1">Cytoplasm</location>
    </subcellularLocation>
</comment>
<comment type="similarity">
    <text evidence="1">Belongs to the ArgR family.</text>
</comment>